<evidence type="ECO:0000255" key="1">
    <source>
        <dbReference type="HAMAP-Rule" id="MF_00402"/>
    </source>
</evidence>
<evidence type="ECO:0000305" key="2"/>
<feature type="chain" id="PRO_1000193842" description="Large ribosomal subunit protein bL19">
    <location>
        <begin position="1"/>
        <end position="115"/>
    </location>
</feature>
<organism>
    <name type="scientific">Finegoldia magna (strain ATCC 29328 / DSM 20472 / WAL 2508)</name>
    <name type="common">Peptostreptococcus magnus</name>
    <dbReference type="NCBI Taxonomy" id="334413"/>
    <lineage>
        <taxon>Bacteria</taxon>
        <taxon>Bacillati</taxon>
        <taxon>Bacillota</taxon>
        <taxon>Tissierellia</taxon>
        <taxon>Tissierellales</taxon>
        <taxon>Peptoniphilaceae</taxon>
        <taxon>Finegoldia</taxon>
    </lineage>
</organism>
<comment type="function">
    <text evidence="1">This protein is located at the 30S-50S ribosomal subunit interface and may play a role in the structure and function of the aminoacyl-tRNA binding site.</text>
</comment>
<comment type="similarity">
    <text evidence="1">Belongs to the bacterial ribosomal protein bL19 family.</text>
</comment>
<protein>
    <recommendedName>
        <fullName evidence="1">Large ribosomal subunit protein bL19</fullName>
    </recommendedName>
    <alternativeName>
        <fullName evidence="2">50S ribosomal protein L19</fullName>
    </alternativeName>
</protein>
<reference key="1">
    <citation type="journal article" date="2008" name="DNA Res.">
        <title>Complete genome sequence of Finegoldia magna, an anaerobic opportunistic pathogen.</title>
        <authorList>
            <person name="Goto T."/>
            <person name="Yamashita A."/>
            <person name="Hirakawa H."/>
            <person name="Matsutani M."/>
            <person name="Todo K."/>
            <person name="Ohshima K."/>
            <person name="Toh H."/>
            <person name="Miyamoto K."/>
            <person name="Kuhara S."/>
            <person name="Hattori M."/>
            <person name="Shimizu T."/>
            <person name="Akimoto S."/>
        </authorList>
    </citation>
    <scope>NUCLEOTIDE SEQUENCE [LARGE SCALE GENOMIC DNA]</scope>
    <source>
        <strain>ATCC 29328 / DSM 20472 / WAL 2508</strain>
    </source>
</reference>
<dbReference type="EMBL" id="AP008971">
    <property type="protein sequence ID" value="BAG07948.1"/>
    <property type="molecule type" value="Genomic_DNA"/>
</dbReference>
<dbReference type="RefSeq" id="WP_002835325.1">
    <property type="nucleotide sequence ID" value="NC_010376.1"/>
</dbReference>
<dbReference type="SMR" id="B0S048"/>
<dbReference type="STRING" id="334413.FMG_0530"/>
<dbReference type="GeneID" id="60839901"/>
<dbReference type="KEGG" id="fma:FMG_0530"/>
<dbReference type="eggNOG" id="COG0335">
    <property type="taxonomic scope" value="Bacteria"/>
</dbReference>
<dbReference type="HOGENOM" id="CLU_103507_2_1_9"/>
<dbReference type="Proteomes" id="UP000001319">
    <property type="component" value="Chromosome"/>
</dbReference>
<dbReference type="GO" id="GO:0022625">
    <property type="term" value="C:cytosolic large ribosomal subunit"/>
    <property type="evidence" value="ECO:0007669"/>
    <property type="project" value="TreeGrafter"/>
</dbReference>
<dbReference type="GO" id="GO:0003735">
    <property type="term" value="F:structural constituent of ribosome"/>
    <property type="evidence" value="ECO:0007669"/>
    <property type="project" value="InterPro"/>
</dbReference>
<dbReference type="GO" id="GO:0006412">
    <property type="term" value="P:translation"/>
    <property type="evidence" value="ECO:0007669"/>
    <property type="project" value="UniProtKB-UniRule"/>
</dbReference>
<dbReference type="Gene3D" id="2.30.30.790">
    <property type="match status" value="1"/>
</dbReference>
<dbReference type="HAMAP" id="MF_00402">
    <property type="entry name" value="Ribosomal_bL19"/>
    <property type="match status" value="1"/>
</dbReference>
<dbReference type="InterPro" id="IPR001857">
    <property type="entry name" value="Ribosomal_bL19"/>
</dbReference>
<dbReference type="InterPro" id="IPR018257">
    <property type="entry name" value="Ribosomal_bL19_CS"/>
</dbReference>
<dbReference type="InterPro" id="IPR038657">
    <property type="entry name" value="Ribosomal_bL19_sf"/>
</dbReference>
<dbReference type="InterPro" id="IPR008991">
    <property type="entry name" value="Translation_prot_SH3-like_sf"/>
</dbReference>
<dbReference type="NCBIfam" id="TIGR01024">
    <property type="entry name" value="rplS_bact"/>
    <property type="match status" value="1"/>
</dbReference>
<dbReference type="PANTHER" id="PTHR15680:SF9">
    <property type="entry name" value="LARGE RIBOSOMAL SUBUNIT PROTEIN BL19M"/>
    <property type="match status" value="1"/>
</dbReference>
<dbReference type="PANTHER" id="PTHR15680">
    <property type="entry name" value="RIBOSOMAL PROTEIN L19"/>
    <property type="match status" value="1"/>
</dbReference>
<dbReference type="Pfam" id="PF01245">
    <property type="entry name" value="Ribosomal_L19"/>
    <property type="match status" value="1"/>
</dbReference>
<dbReference type="PIRSF" id="PIRSF002191">
    <property type="entry name" value="Ribosomal_L19"/>
    <property type="match status" value="1"/>
</dbReference>
<dbReference type="PRINTS" id="PR00061">
    <property type="entry name" value="RIBOSOMALL19"/>
</dbReference>
<dbReference type="SUPFAM" id="SSF50104">
    <property type="entry name" value="Translation proteins SH3-like domain"/>
    <property type="match status" value="1"/>
</dbReference>
<dbReference type="PROSITE" id="PS01015">
    <property type="entry name" value="RIBOSOMAL_L19"/>
    <property type="match status" value="1"/>
</dbReference>
<name>RL19_FINM2</name>
<gene>
    <name evidence="1" type="primary">rplS</name>
    <name type="ordered locus">FMG_0530</name>
</gene>
<keyword id="KW-1185">Reference proteome</keyword>
<keyword id="KW-0687">Ribonucleoprotein</keyword>
<keyword id="KW-0689">Ribosomal protein</keyword>
<proteinExistence type="inferred from homology"/>
<sequence>MDIIKTLEDEQLRENKFDFHVGDTVKVDYLIKEGNKERVQVYEGTVIKMQGTGLRRTFTVRRLAYGVGVERTFLINSPRVTNVRLVREGKVRRSKLFYLRHREGKAAKVKEKQKF</sequence>
<accession>B0S048</accession>